<sequence>MQADQVLKLVRLSEKSNKLSSELGQYTFEVFKGTNKHQIAEAVEQTFKVTVKRVNVQNYRGKNKKSRTGRPSVGSDYKKAIVTLKAGDKIELV</sequence>
<dbReference type="EMBL" id="CP001032">
    <property type="protein sequence ID" value="ACB73515.1"/>
    <property type="molecule type" value="Genomic_DNA"/>
</dbReference>
<dbReference type="RefSeq" id="WP_012373053.1">
    <property type="nucleotide sequence ID" value="NC_010571.1"/>
</dbReference>
<dbReference type="SMR" id="B1ZNE6"/>
<dbReference type="STRING" id="452637.Oter_0224"/>
<dbReference type="KEGG" id="ote:Oter_0224"/>
<dbReference type="eggNOG" id="COG0089">
    <property type="taxonomic scope" value="Bacteria"/>
</dbReference>
<dbReference type="HOGENOM" id="CLU_037562_3_1_0"/>
<dbReference type="OrthoDB" id="9793353at2"/>
<dbReference type="Proteomes" id="UP000007013">
    <property type="component" value="Chromosome"/>
</dbReference>
<dbReference type="GO" id="GO:1990904">
    <property type="term" value="C:ribonucleoprotein complex"/>
    <property type="evidence" value="ECO:0007669"/>
    <property type="project" value="UniProtKB-KW"/>
</dbReference>
<dbReference type="GO" id="GO:0005840">
    <property type="term" value="C:ribosome"/>
    <property type="evidence" value="ECO:0007669"/>
    <property type="project" value="UniProtKB-KW"/>
</dbReference>
<dbReference type="GO" id="GO:0019843">
    <property type="term" value="F:rRNA binding"/>
    <property type="evidence" value="ECO:0007669"/>
    <property type="project" value="UniProtKB-UniRule"/>
</dbReference>
<dbReference type="GO" id="GO:0003735">
    <property type="term" value="F:structural constituent of ribosome"/>
    <property type="evidence" value="ECO:0007669"/>
    <property type="project" value="InterPro"/>
</dbReference>
<dbReference type="GO" id="GO:0006412">
    <property type="term" value="P:translation"/>
    <property type="evidence" value="ECO:0007669"/>
    <property type="project" value="UniProtKB-UniRule"/>
</dbReference>
<dbReference type="Gene3D" id="3.30.70.330">
    <property type="match status" value="1"/>
</dbReference>
<dbReference type="HAMAP" id="MF_01369_B">
    <property type="entry name" value="Ribosomal_uL23_B"/>
    <property type="match status" value="1"/>
</dbReference>
<dbReference type="InterPro" id="IPR012677">
    <property type="entry name" value="Nucleotide-bd_a/b_plait_sf"/>
</dbReference>
<dbReference type="InterPro" id="IPR013025">
    <property type="entry name" value="Ribosomal_uL23-like"/>
</dbReference>
<dbReference type="InterPro" id="IPR012678">
    <property type="entry name" value="Ribosomal_uL23/eL15/eS24_sf"/>
</dbReference>
<dbReference type="InterPro" id="IPR001014">
    <property type="entry name" value="Ribosomal_uL23_CS"/>
</dbReference>
<dbReference type="NCBIfam" id="NF004363">
    <property type="entry name" value="PRK05738.2-4"/>
    <property type="match status" value="1"/>
</dbReference>
<dbReference type="Pfam" id="PF00276">
    <property type="entry name" value="Ribosomal_L23"/>
    <property type="match status" value="1"/>
</dbReference>
<dbReference type="SUPFAM" id="SSF54189">
    <property type="entry name" value="Ribosomal proteins S24e, L23 and L15e"/>
    <property type="match status" value="1"/>
</dbReference>
<dbReference type="PROSITE" id="PS00050">
    <property type="entry name" value="RIBOSOMAL_L23"/>
    <property type="match status" value="1"/>
</dbReference>
<evidence type="ECO:0000255" key="1">
    <source>
        <dbReference type="HAMAP-Rule" id="MF_01369"/>
    </source>
</evidence>
<evidence type="ECO:0000305" key="2"/>
<name>RL23_OPITP</name>
<organism>
    <name type="scientific">Opitutus terrae (strain DSM 11246 / JCM 15787 / PB90-1)</name>
    <dbReference type="NCBI Taxonomy" id="452637"/>
    <lineage>
        <taxon>Bacteria</taxon>
        <taxon>Pseudomonadati</taxon>
        <taxon>Verrucomicrobiota</taxon>
        <taxon>Opitutia</taxon>
        <taxon>Opitutales</taxon>
        <taxon>Opitutaceae</taxon>
        <taxon>Opitutus</taxon>
    </lineage>
</organism>
<accession>B1ZNE6</accession>
<gene>
    <name evidence="1" type="primary">rplW</name>
    <name type="ordered locus">Oter_0224</name>
</gene>
<reference key="1">
    <citation type="journal article" date="2011" name="J. Bacteriol.">
        <title>Genome sequence of the verrucomicrobium Opitutus terrae PB90-1, an abundant inhabitant of rice paddy soil ecosystems.</title>
        <authorList>
            <person name="van Passel M.W."/>
            <person name="Kant R."/>
            <person name="Palva A."/>
            <person name="Copeland A."/>
            <person name="Lucas S."/>
            <person name="Lapidus A."/>
            <person name="Glavina del Rio T."/>
            <person name="Pitluck S."/>
            <person name="Goltsman E."/>
            <person name="Clum A."/>
            <person name="Sun H."/>
            <person name="Schmutz J."/>
            <person name="Larimer F.W."/>
            <person name="Land M.L."/>
            <person name="Hauser L."/>
            <person name="Kyrpides N."/>
            <person name="Mikhailova N."/>
            <person name="Richardson P.P."/>
            <person name="Janssen P.H."/>
            <person name="de Vos W.M."/>
            <person name="Smidt H."/>
        </authorList>
    </citation>
    <scope>NUCLEOTIDE SEQUENCE [LARGE SCALE GENOMIC DNA]</scope>
    <source>
        <strain>DSM 11246 / JCM 15787 / PB90-1</strain>
    </source>
</reference>
<keyword id="KW-1185">Reference proteome</keyword>
<keyword id="KW-0687">Ribonucleoprotein</keyword>
<keyword id="KW-0689">Ribosomal protein</keyword>
<keyword id="KW-0694">RNA-binding</keyword>
<keyword id="KW-0699">rRNA-binding</keyword>
<feature type="chain" id="PRO_1000184099" description="Large ribosomal subunit protein uL23">
    <location>
        <begin position="1"/>
        <end position="93"/>
    </location>
</feature>
<protein>
    <recommendedName>
        <fullName evidence="1">Large ribosomal subunit protein uL23</fullName>
    </recommendedName>
    <alternativeName>
        <fullName evidence="2">50S ribosomal protein L23</fullName>
    </alternativeName>
</protein>
<comment type="function">
    <text evidence="1">One of the early assembly proteins it binds 23S rRNA. One of the proteins that surrounds the polypeptide exit tunnel on the outside of the ribosome. Forms the main docking site for trigger factor binding to the ribosome.</text>
</comment>
<comment type="subunit">
    <text evidence="1">Part of the 50S ribosomal subunit. Contacts protein L29, and trigger factor when it is bound to the ribosome.</text>
</comment>
<comment type="similarity">
    <text evidence="1">Belongs to the universal ribosomal protein uL23 family.</text>
</comment>
<proteinExistence type="inferred from homology"/>